<proteinExistence type="evidence at protein level"/>
<name>GST1_ASCSU</name>
<evidence type="ECO:0000250" key="1">
    <source>
        <dbReference type="UniProtKB" id="O60760"/>
    </source>
</evidence>
<evidence type="ECO:0000250" key="2">
    <source>
        <dbReference type="UniProtKB" id="P46088"/>
    </source>
</evidence>
<evidence type="ECO:0000269" key="3">
    <source>
    </source>
</evidence>
<evidence type="ECO:0000305" key="4"/>
<evidence type="ECO:0007829" key="5">
    <source>
        <dbReference type="PDB" id="4Q5F"/>
    </source>
</evidence>
<gene>
    <name type="primary">GST1</name>
</gene>
<accession>P46436</accession>
<feature type="initiator methionine" description="Removed" evidence="3">
    <location>
        <position position="1"/>
    </location>
</feature>
<feature type="chain" id="PRO_0000185922" description="Glutathione S-transferase 1">
    <location>
        <begin position="2"/>
        <end position="206"/>
    </location>
</feature>
<feature type="domain" description="GST N-terminal">
    <location>
        <begin position="2"/>
        <end position="79"/>
    </location>
</feature>
<feature type="domain" description="GST C-terminal">
    <location>
        <begin position="81"/>
        <end position="206"/>
    </location>
</feature>
<feature type="binding site" evidence="1">
    <location>
        <position position="8"/>
    </location>
    <ligand>
        <name>glutathione</name>
        <dbReference type="ChEBI" id="CHEBI:57925"/>
    </ligand>
</feature>
<feature type="binding site" evidence="1">
    <location>
        <position position="39"/>
    </location>
    <ligand>
        <name>glutathione</name>
        <dbReference type="ChEBI" id="CHEBI:57925"/>
    </ligand>
</feature>
<feature type="binding site" evidence="2">
    <location>
        <position position="43"/>
    </location>
    <ligand>
        <name>glutathione</name>
        <dbReference type="ChEBI" id="CHEBI:57925"/>
    </ligand>
</feature>
<feature type="binding site" evidence="1">
    <location>
        <begin position="49"/>
        <end position="51"/>
    </location>
    <ligand>
        <name>glutathione</name>
        <dbReference type="ChEBI" id="CHEBI:57925"/>
    </ligand>
</feature>
<feature type="binding site" evidence="1">
    <location>
        <begin position="63"/>
        <end position="64"/>
    </location>
    <ligand>
        <name>glutathione</name>
        <dbReference type="ChEBI" id="CHEBI:57925"/>
    </ligand>
</feature>
<feature type="strand" evidence="5">
    <location>
        <begin position="4"/>
        <end position="11"/>
    </location>
</feature>
<feature type="turn" evidence="5">
    <location>
        <begin position="13"/>
        <end position="15"/>
    </location>
</feature>
<feature type="helix" evidence="5">
    <location>
        <begin position="16"/>
        <end position="24"/>
    </location>
</feature>
<feature type="strand" evidence="5">
    <location>
        <begin position="30"/>
        <end position="34"/>
    </location>
</feature>
<feature type="helix" evidence="5">
    <location>
        <begin position="36"/>
        <end position="38"/>
    </location>
</feature>
<feature type="helix" evidence="5">
    <location>
        <begin position="39"/>
        <end position="42"/>
    </location>
</feature>
<feature type="helix" evidence="5">
    <location>
        <begin position="43"/>
        <end position="45"/>
    </location>
</feature>
<feature type="strand" evidence="5">
    <location>
        <begin position="46"/>
        <end position="49"/>
    </location>
</feature>
<feature type="strand" evidence="5">
    <location>
        <begin position="53"/>
        <end position="56"/>
    </location>
</feature>
<feature type="strand" evidence="5">
    <location>
        <begin position="59"/>
        <end position="62"/>
    </location>
</feature>
<feature type="helix" evidence="5">
    <location>
        <begin position="64"/>
        <end position="74"/>
    </location>
</feature>
<feature type="helix" evidence="5">
    <location>
        <begin position="82"/>
        <end position="102"/>
    </location>
</feature>
<feature type="helix" evidence="5">
    <location>
        <begin position="103"/>
        <end position="105"/>
    </location>
</feature>
<feature type="helix" evidence="5">
    <location>
        <begin position="106"/>
        <end position="110"/>
    </location>
</feature>
<feature type="helix" evidence="5">
    <location>
        <begin position="117"/>
        <end position="123"/>
    </location>
</feature>
<feature type="helix" evidence="5">
    <location>
        <begin position="125"/>
        <end position="143"/>
    </location>
</feature>
<feature type="strand" evidence="5">
    <location>
        <begin position="145"/>
        <end position="152"/>
    </location>
</feature>
<feature type="helix" evidence="5">
    <location>
        <begin position="155"/>
        <end position="170"/>
    </location>
</feature>
<feature type="turn" evidence="5">
    <location>
        <begin position="172"/>
        <end position="177"/>
    </location>
</feature>
<feature type="helix" evidence="5">
    <location>
        <begin position="179"/>
        <end position="190"/>
    </location>
</feature>
<feature type="helix" evidence="5">
    <location>
        <begin position="192"/>
        <end position="200"/>
    </location>
</feature>
<reference key="1">
    <citation type="journal article" date="1994" name="Mol. Biochem. Parasitol.">
        <title>Molecular cloning and expression of a cDNA encoding glutathione S-transferase from Ascaris suum.</title>
        <authorList>
            <person name="Liebau E."/>
            <person name="Schoenberger O.L."/>
            <person name="Walter R.D."/>
            <person name="Henkle-Duehrsen K.J."/>
        </authorList>
    </citation>
    <scope>NUCLEOTIDE SEQUENCE</scope>
    <scope>PROTEIN SEQUENCE OF 2-41</scope>
</reference>
<reference key="2">
    <citation type="journal article" date="1997" name="Biochem. J.">
        <title>Structural and functional analysis of a glutathione S-transferase from Ascaris suum.</title>
        <authorList>
            <person name="Liebau E."/>
            <person name="Eckelt V.H."/>
            <person name="Wildenburg G."/>
            <person name="Teesdale-Spittle P."/>
            <person name="Brophy P.M."/>
            <person name="Walter R.D."/>
            <person name="Henkle-Duehrsen K."/>
        </authorList>
    </citation>
    <scope>NUCLEOTIDE SEQUENCE [GENOMIC DNA]</scope>
</reference>
<sequence>MPQYKLTYFDIRGLGEGARLIFHQAGVKFEDNRLKREDWPALKPKTPFGQLPLLEVDGEVLAQSAAIYRYLGRQFGLAGKTPMEEAQVDSIFDQFKDFMAELRPCFRVLAGFEEGDKEKVLKEVAVPARDKHLPLLEKFLAKSGSEYMVGKSVTWADLVITDSLASWESLIPDFLSGHLQLKKYIEHVRELPNIKKWIAERPKTPY</sequence>
<protein>
    <recommendedName>
        <fullName>Glutathione S-transferase 1</fullName>
        <ecNumber>2.5.1.18</ecNumber>
    </recommendedName>
    <alternativeName>
        <fullName>GST class-sigma</fullName>
    </alternativeName>
</protein>
<comment type="function">
    <text>Conjugation of reduced glutathione to a wide number of exogenous and endogenous hydrophobic electrophiles. Can also function as a GSH peroxidase.</text>
</comment>
<comment type="catalytic activity">
    <reaction>
        <text>RX + glutathione = an S-substituted glutathione + a halide anion + H(+)</text>
        <dbReference type="Rhea" id="RHEA:16437"/>
        <dbReference type="ChEBI" id="CHEBI:15378"/>
        <dbReference type="ChEBI" id="CHEBI:16042"/>
        <dbReference type="ChEBI" id="CHEBI:17792"/>
        <dbReference type="ChEBI" id="CHEBI:57925"/>
        <dbReference type="ChEBI" id="CHEBI:90779"/>
        <dbReference type="EC" id="2.5.1.18"/>
    </reaction>
</comment>
<comment type="similarity">
    <text evidence="4">Belongs to the GST superfamily. Sigma family.</text>
</comment>
<keyword id="KW-0002">3D-structure</keyword>
<keyword id="KW-0903">Direct protein sequencing</keyword>
<keyword id="KW-0808">Transferase</keyword>
<dbReference type="EC" id="2.5.1.18"/>
<dbReference type="EMBL" id="X75502">
    <property type="protein sequence ID" value="CAA53218.1"/>
    <property type="molecule type" value="mRNA"/>
</dbReference>
<dbReference type="EMBL" id="Y10613">
    <property type="protein sequence ID" value="CAA71620.1"/>
    <property type="molecule type" value="Genomic_DNA"/>
</dbReference>
<dbReference type="PIR" id="S38626">
    <property type="entry name" value="S38626"/>
</dbReference>
<dbReference type="PDB" id="4Q5F">
    <property type="method" value="X-ray"/>
    <property type="resolution" value="2.45 A"/>
    <property type="chains" value="A/D=1-206"/>
</dbReference>
<dbReference type="PDBsum" id="4Q5F"/>
<dbReference type="SMR" id="P46436"/>
<dbReference type="Allergome" id="10991">
    <property type="allergen name" value="Asc l 13"/>
</dbReference>
<dbReference type="Allergome" id="10992">
    <property type="allergen name" value="Asc l 13.0101"/>
</dbReference>
<dbReference type="Allergome" id="11669">
    <property type="allergen name" value="Asc s 13.0101"/>
</dbReference>
<dbReference type="Allergome" id="7680">
    <property type="allergen name" value="Asc s 13"/>
</dbReference>
<dbReference type="EnsemblMetazoa" id="AgR005_g358_t01">
    <property type="protein sequence ID" value="AgR005_g358_t01"/>
    <property type="gene ID" value="AgR005_g358"/>
</dbReference>
<dbReference type="EnsemblMetazoa" id="AgR005_g358_t03">
    <property type="protein sequence ID" value="AgR005_g358_t03"/>
    <property type="gene ID" value="AgR005_g358"/>
</dbReference>
<dbReference type="EnsemblMetazoa" id="AgR005_g358_t04">
    <property type="protein sequence ID" value="AgR005_g358_t04"/>
    <property type="gene ID" value="AgR005_g358"/>
</dbReference>
<dbReference type="BRENDA" id="2.5.1.18">
    <property type="organism ID" value="474"/>
</dbReference>
<dbReference type="EvolutionaryTrace" id="P46436"/>
<dbReference type="GO" id="GO:0005903">
    <property type="term" value="C:brush border"/>
    <property type="evidence" value="ECO:0000314"/>
    <property type="project" value="WormBase"/>
</dbReference>
<dbReference type="GO" id="GO:0005737">
    <property type="term" value="C:cytoplasm"/>
    <property type="evidence" value="ECO:0000314"/>
    <property type="project" value="WormBase"/>
</dbReference>
<dbReference type="GO" id="GO:0004602">
    <property type="term" value="F:glutathione peroxidase activity"/>
    <property type="evidence" value="ECO:0000314"/>
    <property type="project" value="WormBase"/>
</dbReference>
<dbReference type="GO" id="GO:0004364">
    <property type="term" value="F:glutathione transferase activity"/>
    <property type="evidence" value="ECO:0000314"/>
    <property type="project" value="WormBase"/>
</dbReference>
<dbReference type="GO" id="GO:0098869">
    <property type="term" value="P:cellular oxidant detoxification"/>
    <property type="evidence" value="ECO:0000314"/>
    <property type="project" value="UniProtKB"/>
</dbReference>
<dbReference type="GO" id="GO:0006749">
    <property type="term" value="P:glutathione metabolic process"/>
    <property type="evidence" value="ECO:0007669"/>
    <property type="project" value="TreeGrafter"/>
</dbReference>
<dbReference type="CDD" id="cd03192">
    <property type="entry name" value="GST_C_Sigma_like"/>
    <property type="match status" value="1"/>
</dbReference>
<dbReference type="CDD" id="cd03039">
    <property type="entry name" value="GST_N_Sigma_like"/>
    <property type="match status" value="1"/>
</dbReference>
<dbReference type="FunFam" id="1.20.1050.10:FF:000031">
    <property type="entry name" value="Glutathione S-Transferase"/>
    <property type="match status" value="1"/>
</dbReference>
<dbReference type="FunFam" id="3.40.30.10:FF:000035">
    <property type="entry name" value="hematopoietic prostaglandin D synthase"/>
    <property type="match status" value="1"/>
</dbReference>
<dbReference type="Gene3D" id="1.20.1050.10">
    <property type="match status" value="1"/>
</dbReference>
<dbReference type="Gene3D" id="3.40.30.10">
    <property type="entry name" value="Glutaredoxin"/>
    <property type="match status" value="1"/>
</dbReference>
<dbReference type="InterPro" id="IPR010987">
    <property type="entry name" value="Glutathione-S-Trfase_C-like"/>
</dbReference>
<dbReference type="InterPro" id="IPR036282">
    <property type="entry name" value="Glutathione-S-Trfase_C_sf"/>
</dbReference>
<dbReference type="InterPro" id="IPR004045">
    <property type="entry name" value="Glutathione_S-Trfase_N"/>
</dbReference>
<dbReference type="InterPro" id="IPR004046">
    <property type="entry name" value="GST_C"/>
</dbReference>
<dbReference type="InterPro" id="IPR050213">
    <property type="entry name" value="GST_superfamily"/>
</dbReference>
<dbReference type="InterPro" id="IPR036249">
    <property type="entry name" value="Thioredoxin-like_sf"/>
</dbReference>
<dbReference type="PANTHER" id="PTHR11571">
    <property type="entry name" value="GLUTATHIONE S-TRANSFERASE"/>
    <property type="match status" value="1"/>
</dbReference>
<dbReference type="PANTHER" id="PTHR11571:SF224">
    <property type="entry name" value="HEMATOPOIETIC PROSTAGLANDIN D SYNTHASE"/>
    <property type="match status" value="1"/>
</dbReference>
<dbReference type="Pfam" id="PF14497">
    <property type="entry name" value="GST_C_3"/>
    <property type="match status" value="1"/>
</dbReference>
<dbReference type="Pfam" id="PF02798">
    <property type="entry name" value="GST_N"/>
    <property type="match status" value="1"/>
</dbReference>
<dbReference type="SFLD" id="SFLDG01205">
    <property type="entry name" value="AMPS.1"/>
    <property type="match status" value="1"/>
</dbReference>
<dbReference type="SFLD" id="SFLDG00363">
    <property type="entry name" value="AMPS_(cytGST):_Alpha-__Mu-__Pi"/>
    <property type="match status" value="1"/>
</dbReference>
<dbReference type="SUPFAM" id="SSF47616">
    <property type="entry name" value="GST C-terminal domain-like"/>
    <property type="match status" value="1"/>
</dbReference>
<dbReference type="SUPFAM" id="SSF52833">
    <property type="entry name" value="Thioredoxin-like"/>
    <property type="match status" value="1"/>
</dbReference>
<dbReference type="PROSITE" id="PS50405">
    <property type="entry name" value="GST_CTER"/>
    <property type="match status" value="1"/>
</dbReference>
<dbReference type="PROSITE" id="PS50404">
    <property type="entry name" value="GST_NTER"/>
    <property type="match status" value="1"/>
</dbReference>
<organism>
    <name type="scientific">Ascaris suum</name>
    <name type="common">Pig roundworm</name>
    <name type="synonym">Ascaris lumbricoides</name>
    <dbReference type="NCBI Taxonomy" id="6253"/>
    <lineage>
        <taxon>Eukaryota</taxon>
        <taxon>Metazoa</taxon>
        <taxon>Ecdysozoa</taxon>
        <taxon>Nematoda</taxon>
        <taxon>Chromadorea</taxon>
        <taxon>Rhabditida</taxon>
        <taxon>Spirurina</taxon>
        <taxon>Ascaridomorpha</taxon>
        <taxon>Ascaridoidea</taxon>
        <taxon>Ascarididae</taxon>
        <taxon>Ascaris</taxon>
    </lineage>
</organism>